<dbReference type="EMBL" id="CP000350">
    <property type="protein sequence ID" value="ABJ75097.1"/>
    <property type="molecule type" value="Genomic_DNA"/>
</dbReference>
<dbReference type="RefSeq" id="WP_002754115.1">
    <property type="nucleotide sequence ID" value="NC_008510.1"/>
</dbReference>
<dbReference type="SMR" id="Q04VH3"/>
<dbReference type="KEGG" id="lbj:LBJ_0381"/>
<dbReference type="HOGENOM" id="CLU_002794_4_1_12"/>
<dbReference type="Proteomes" id="UP000000656">
    <property type="component" value="Chromosome 1"/>
</dbReference>
<dbReference type="GO" id="GO:0005737">
    <property type="term" value="C:cytoplasm"/>
    <property type="evidence" value="ECO:0007669"/>
    <property type="project" value="UniProtKB-SubCell"/>
</dbReference>
<dbReference type="GO" id="GO:0005525">
    <property type="term" value="F:GTP binding"/>
    <property type="evidence" value="ECO:0007669"/>
    <property type="project" value="UniProtKB-UniRule"/>
</dbReference>
<dbReference type="GO" id="GO:0003924">
    <property type="term" value="F:GTPase activity"/>
    <property type="evidence" value="ECO:0007669"/>
    <property type="project" value="InterPro"/>
</dbReference>
<dbReference type="GO" id="GO:0003746">
    <property type="term" value="F:translation elongation factor activity"/>
    <property type="evidence" value="ECO:0007669"/>
    <property type="project" value="UniProtKB-UniRule"/>
</dbReference>
<dbReference type="CDD" id="cd01886">
    <property type="entry name" value="EF-G"/>
    <property type="match status" value="1"/>
</dbReference>
<dbReference type="CDD" id="cd16262">
    <property type="entry name" value="EFG_III"/>
    <property type="match status" value="1"/>
</dbReference>
<dbReference type="CDD" id="cd01434">
    <property type="entry name" value="EFG_mtEFG1_IV"/>
    <property type="match status" value="1"/>
</dbReference>
<dbReference type="CDD" id="cd04091">
    <property type="entry name" value="mtEFG1_II_like"/>
    <property type="match status" value="1"/>
</dbReference>
<dbReference type="FunFam" id="3.30.230.10:FF:000003">
    <property type="entry name" value="Elongation factor G"/>
    <property type="match status" value="1"/>
</dbReference>
<dbReference type="FunFam" id="3.30.70.240:FF:000001">
    <property type="entry name" value="Elongation factor G"/>
    <property type="match status" value="1"/>
</dbReference>
<dbReference type="FunFam" id="3.30.70.870:FF:000001">
    <property type="entry name" value="Elongation factor G"/>
    <property type="match status" value="1"/>
</dbReference>
<dbReference type="FunFam" id="3.40.50.300:FF:001393">
    <property type="entry name" value="Elongation factor G"/>
    <property type="match status" value="1"/>
</dbReference>
<dbReference type="FunFam" id="2.40.30.10:FF:000022">
    <property type="entry name" value="Elongation factor G, mitochondrial"/>
    <property type="match status" value="1"/>
</dbReference>
<dbReference type="Gene3D" id="3.30.230.10">
    <property type="match status" value="1"/>
</dbReference>
<dbReference type="Gene3D" id="3.30.70.240">
    <property type="match status" value="1"/>
</dbReference>
<dbReference type="Gene3D" id="3.30.70.870">
    <property type="entry name" value="Elongation Factor G (Translational Gtpase), domain 3"/>
    <property type="match status" value="1"/>
</dbReference>
<dbReference type="Gene3D" id="3.40.50.300">
    <property type="entry name" value="P-loop containing nucleotide triphosphate hydrolases"/>
    <property type="match status" value="1"/>
</dbReference>
<dbReference type="Gene3D" id="2.40.30.10">
    <property type="entry name" value="Translation factors"/>
    <property type="match status" value="1"/>
</dbReference>
<dbReference type="HAMAP" id="MF_00054_B">
    <property type="entry name" value="EF_G_EF_2_B"/>
    <property type="match status" value="1"/>
</dbReference>
<dbReference type="InterPro" id="IPR041095">
    <property type="entry name" value="EFG_II"/>
</dbReference>
<dbReference type="InterPro" id="IPR009022">
    <property type="entry name" value="EFG_III"/>
</dbReference>
<dbReference type="InterPro" id="IPR035647">
    <property type="entry name" value="EFG_III/V"/>
</dbReference>
<dbReference type="InterPro" id="IPR047872">
    <property type="entry name" value="EFG_IV"/>
</dbReference>
<dbReference type="InterPro" id="IPR000640">
    <property type="entry name" value="EFG_V-like"/>
</dbReference>
<dbReference type="InterPro" id="IPR004161">
    <property type="entry name" value="EFTu-like_2"/>
</dbReference>
<dbReference type="InterPro" id="IPR031157">
    <property type="entry name" value="G_TR_CS"/>
</dbReference>
<dbReference type="InterPro" id="IPR027417">
    <property type="entry name" value="P-loop_NTPase"/>
</dbReference>
<dbReference type="InterPro" id="IPR020568">
    <property type="entry name" value="Ribosomal_Su5_D2-typ_SF"/>
</dbReference>
<dbReference type="InterPro" id="IPR014721">
    <property type="entry name" value="Ribsml_uS5_D2-typ_fold_subgr"/>
</dbReference>
<dbReference type="InterPro" id="IPR005225">
    <property type="entry name" value="Small_GTP-bd"/>
</dbReference>
<dbReference type="InterPro" id="IPR000795">
    <property type="entry name" value="T_Tr_GTP-bd_dom"/>
</dbReference>
<dbReference type="InterPro" id="IPR009000">
    <property type="entry name" value="Transl_B-barrel_sf"/>
</dbReference>
<dbReference type="InterPro" id="IPR004540">
    <property type="entry name" value="Transl_elong_EFG/EF2"/>
</dbReference>
<dbReference type="InterPro" id="IPR005517">
    <property type="entry name" value="Transl_elong_EFG/EF2_IV"/>
</dbReference>
<dbReference type="NCBIfam" id="TIGR00484">
    <property type="entry name" value="EF-G"/>
    <property type="match status" value="1"/>
</dbReference>
<dbReference type="NCBIfam" id="NF009381">
    <property type="entry name" value="PRK12740.1-5"/>
    <property type="match status" value="1"/>
</dbReference>
<dbReference type="NCBIfam" id="TIGR00231">
    <property type="entry name" value="small_GTP"/>
    <property type="match status" value="1"/>
</dbReference>
<dbReference type="PANTHER" id="PTHR43636">
    <property type="entry name" value="ELONGATION FACTOR G, MITOCHONDRIAL"/>
    <property type="match status" value="1"/>
</dbReference>
<dbReference type="PANTHER" id="PTHR43636:SF2">
    <property type="entry name" value="ELONGATION FACTOR G, MITOCHONDRIAL"/>
    <property type="match status" value="1"/>
</dbReference>
<dbReference type="Pfam" id="PF00679">
    <property type="entry name" value="EFG_C"/>
    <property type="match status" value="1"/>
</dbReference>
<dbReference type="Pfam" id="PF14492">
    <property type="entry name" value="EFG_III"/>
    <property type="match status" value="1"/>
</dbReference>
<dbReference type="Pfam" id="PF03764">
    <property type="entry name" value="EFG_IV"/>
    <property type="match status" value="1"/>
</dbReference>
<dbReference type="Pfam" id="PF00009">
    <property type="entry name" value="GTP_EFTU"/>
    <property type="match status" value="1"/>
</dbReference>
<dbReference type="Pfam" id="PF03144">
    <property type="entry name" value="GTP_EFTU_D2"/>
    <property type="match status" value="1"/>
</dbReference>
<dbReference type="PRINTS" id="PR00315">
    <property type="entry name" value="ELONGATNFCT"/>
</dbReference>
<dbReference type="SMART" id="SM00838">
    <property type="entry name" value="EFG_C"/>
    <property type="match status" value="1"/>
</dbReference>
<dbReference type="SMART" id="SM00889">
    <property type="entry name" value="EFG_IV"/>
    <property type="match status" value="1"/>
</dbReference>
<dbReference type="SUPFAM" id="SSF54980">
    <property type="entry name" value="EF-G C-terminal domain-like"/>
    <property type="match status" value="2"/>
</dbReference>
<dbReference type="SUPFAM" id="SSF52540">
    <property type="entry name" value="P-loop containing nucleoside triphosphate hydrolases"/>
    <property type="match status" value="1"/>
</dbReference>
<dbReference type="SUPFAM" id="SSF54211">
    <property type="entry name" value="Ribosomal protein S5 domain 2-like"/>
    <property type="match status" value="1"/>
</dbReference>
<dbReference type="SUPFAM" id="SSF50447">
    <property type="entry name" value="Translation proteins"/>
    <property type="match status" value="1"/>
</dbReference>
<dbReference type="PROSITE" id="PS00301">
    <property type="entry name" value="G_TR_1"/>
    <property type="match status" value="1"/>
</dbReference>
<dbReference type="PROSITE" id="PS51722">
    <property type="entry name" value="G_TR_2"/>
    <property type="match status" value="1"/>
</dbReference>
<feature type="chain" id="PRO_1000201469" description="Elongation factor G">
    <location>
        <begin position="1"/>
        <end position="706"/>
    </location>
</feature>
<feature type="domain" description="tr-type G">
    <location>
        <begin position="15"/>
        <end position="291"/>
    </location>
</feature>
<feature type="binding site" evidence="1">
    <location>
        <begin position="24"/>
        <end position="31"/>
    </location>
    <ligand>
        <name>GTP</name>
        <dbReference type="ChEBI" id="CHEBI:37565"/>
    </ligand>
</feature>
<feature type="binding site" evidence="1">
    <location>
        <begin position="91"/>
        <end position="95"/>
    </location>
    <ligand>
        <name>GTP</name>
        <dbReference type="ChEBI" id="CHEBI:37565"/>
    </ligand>
</feature>
<feature type="binding site" evidence="1">
    <location>
        <begin position="145"/>
        <end position="148"/>
    </location>
    <ligand>
        <name>GTP</name>
        <dbReference type="ChEBI" id="CHEBI:37565"/>
    </ligand>
</feature>
<protein>
    <recommendedName>
        <fullName evidence="1">Elongation factor G</fullName>
        <shortName evidence="1">EF-G</shortName>
    </recommendedName>
</protein>
<accession>Q04VH3</accession>
<keyword id="KW-0963">Cytoplasm</keyword>
<keyword id="KW-0251">Elongation factor</keyword>
<keyword id="KW-0342">GTP-binding</keyword>
<keyword id="KW-0547">Nucleotide-binding</keyword>
<keyword id="KW-0648">Protein biosynthesis</keyword>
<sequence length="706" mass="78974">MSTAVAEFKPSEKLLKTRNIGISAHIDSGKTTLTERILFYTNRIHAIHEVRGKDGVGAKMDSMDLERERGITIQSAATYCQWKNHTINIIDTPGHVDFTVEVERSLRVLDSAILVLCGVAGVQSQSITVDRQMRRYNVPRVAFINKLDRTGANPFRVIEQLKEKLKHNAVPVQIPIGLENDLKGVVDLVTMKAYYFEGKDGMDIQEKEIPDDLKELANKKHEELLDAASMFSDELTEALLEGTPTEEMIKKAIRTGTIELKMTPVFMGSAFKNKGVQKLLDGVLDYLASPVDVKNKALDQNNNEEMIVLESNYEKPLVCLAFKLEDGRYGQLTYVRVYQGKLSKGMTIYNMSNNKKHNVGRLCRMHSDEMEDIDSAEAGDIIALFGIDCASGDTFTDGKLKVSMESMFVPAPVISLTIEAKESKHLNNLAKALNRFTKEDPTFQTHVDPESGQTIIKGMGELHLEVYIERMKREYGVELITGAPQVAYRETITSKADFDYTHKKQTGGQGQFGRVAGYMEPIPLEETLDYDFVNKVVGGAIPREYIQSVDKGFKSCLERGSLIGFPIIGVRCVINDGAYHDVDSSDMAFQIAGRYAFRQGFNKANPQILEPIMKVEVDGPSEFQGAILGSLNQRRGMILNTTEEDAYCKTEAEVPLADMFGYSTVLRSSTQGKAEFSMEFSRYAPVPRNVAEELMKKYKVNNKDED</sequence>
<gene>
    <name evidence="1" type="primary">fusA</name>
    <name type="ordered locus">LBJ_0381</name>
</gene>
<name>EFG_LEPBJ</name>
<reference key="1">
    <citation type="journal article" date="2006" name="Proc. Natl. Acad. Sci. U.S.A.">
        <title>Genome reduction in Leptospira borgpetersenii reflects limited transmission potential.</title>
        <authorList>
            <person name="Bulach D.M."/>
            <person name="Zuerner R.L."/>
            <person name="Wilson P."/>
            <person name="Seemann T."/>
            <person name="McGrath A."/>
            <person name="Cullen P.A."/>
            <person name="Davis J."/>
            <person name="Johnson M."/>
            <person name="Kuczek E."/>
            <person name="Alt D.P."/>
            <person name="Peterson-Burch B."/>
            <person name="Coppel R.L."/>
            <person name="Rood J.I."/>
            <person name="Davies J.K."/>
            <person name="Adler B."/>
        </authorList>
    </citation>
    <scope>NUCLEOTIDE SEQUENCE [LARGE SCALE GENOMIC DNA]</scope>
    <source>
        <strain>JB197</strain>
    </source>
</reference>
<proteinExistence type="inferred from homology"/>
<evidence type="ECO:0000255" key="1">
    <source>
        <dbReference type="HAMAP-Rule" id="MF_00054"/>
    </source>
</evidence>
<comment type="function">
    <text evidence="1">Catalyzes the GTP-dependent ribosomal translocation step during translation elongation. During this step, the ribosome changes from the pre-translocational (PRE) to the post-translocational (POST) state as the newly formed A-site-bound peptidyl-tRNA and P-site-bound deacylated tRNA move to the P and E sites, respectively. Catalyzes the coordinated movement of the two tRNA molecules, the mRNA and conformational changes in the ribosome.</text>
</comment>
<comment type="subcellular location">
    <subcellularLocation>
        <location evidence="1">Cytoplasm</location>
    </subcellularLocation>
</comment>
<comment type="similarity">
    <text evidence="1">Belongs to the TRAFAC class translation factor GTPase superfamily. Classic translation factor GTPase family. EF-G/EF-2 subfamily.</text>
</comment>
<organism>
    <name type="scientific">Leptospira borgpetersenii serovar Hardjo-bovis (strain JB197)</name>
    <dbReference type="NCBI Taxonomy" id="355277"/>
    <lineage>
        <taxon>Bacteria</taxon>
        <taxon>Pseudomonadati</taxon>
        <taxon>Spirochaetota</taxon>
        <taxon>Spirochaetia</taxon>
        <taxon>Leptospirales</taxon>
        <taxon>Leptospiraceae</taxon>
        <taxon>Leptospira</taxon>
    </lineage>
</organism>